<keyword id="KW-0274">FAD</keyword>
<keyword id="KW-0285">Flavoprotein</keyword>
<keyword id="KW-0472">Membrane</keyword>
<keyword id="KW-0496">Mitochondrion</keyword>
<keyword id="KW-1000">Mitochondrion outer membrane</keyword>
<keyword id="KW-0503">Monooxygenase</keyword>
<keyword id="KW-0521">NADP</keyword>
<keyword id="KW-0560">Oxidoreductase</keyword>
<keyword id="KW-0662">Pyridine nucleotide biosynthesis</keyword>
<keyword id="KW-1185">Reference proteome</keyword>
<accession>P0CO48</accession>
<accession>Q55W30</accession>
<accession>Q5KK63</accession>
<proteinExistence type="inferred from homology"/>
<organism>
    <name type="scientific">Cryptococcus neoformans var. neoformans serotype D (strain JEC21 / ATCC MYA-565)</name>
    <name type="common">Filobasidiella neoformans</name>
    <dbReference type="NCBI Taxonomy" id="214684"/>
    <lineage>
        <taxon>Eukaryota</taxon>
        <taxon>Fungi</taxon>
        <taxon>Dikarya</taxon>
        <taxon>Basidiomycota</taxon>
        <taxon>Agaricomycotina</taxon>
        <taxon>Tremellomycetes</taxon>
        <taxon>Tremellales</taxon>
        <taxon>Cryptococcaceae</taxon>
        <taxon>Cryptococcus</taxon>
        <taxon>Cryptococcus neoformans species complex</taxon>
    </lineage>
</organism>
<reference key="1">
    <citation type="journal article" date="2005" name="Science">
        <title>The genome of the basidiomycetous yeast and human pathogen Cryptococcus neoformans.</title>
        <authorList>
            <person name="Loftus B.J."/>
            <person name="Fung E."/>
            <person name="Roncaglia P."/>
            <person name="Rowley D."/>
            <person name="Amedeo P."/>
            <person name="Bruno D."/>
            <person name="Vamathevan J."/>
            <person name="Miranda M."/>
            <person name="Anderson I.J."/>
            <person name="Fraser J.A."/>
            <person name="Allen J.E."/>
            <person name="Bosdet I.E."/>
            <person name="Brent M.R."/>
            <person name="Chiu R."/>
            <person name="Doering T.L."/>
            <person name="Donlin M.J."/>
            <person name="D'Souza C.A."/>
            <person name="Fox D.S."/>
            <person name="Grinberg V."/>
            <person name="Fu J."/>
            <person name="Fukushima M."/>
            <person name="Haas B.J."/>
            <person name="Huang J.C."/>
            <person name="Janbon G."/>
            <person name="Jones S.J.M."/>
            <person name="Koo H.L."/>
            <person name="Krzywinski M.I."/>
            <person name="Kwon-Chung K.J."/>
            <person name="Lengeler K.B."/>
            <person name="Maiti R."/>
            <person name="Marra M.A."/>
            <person name="Marra R.E."/>
            <person name="Mathewson C.A."/>
            <person name="Mitchell T.G."/>
            <person name="Pertea M."/>
            <person name="Riggs F.R."/>
            <person name="Salzberg S.L."/>
            <person name="Schein J.E."/>
            <person name="Shvartsbeyn A."/>
            <person name="Shin H."/>
            <person name="Shumway M."/>
            <person name="Specht C.A."/>
            <person name="Suh B.B."/>
            <person name="Tenney A."/>
            <person name="Utterback T.R."/>
            <person name="Wickes B.L."/>
            <person name="Wortman J.R."/>
            <person name="Wye N.H."/>
            <person name="Kronstad J.W."/>
            <person name="Lodge J.K."/>
            <person name="Heitman J."/>
            <person name="Davis R.W."/>
            <person name="Fraser C.M."/>
            <person name="Hyman R.W."/>
        </authorList>
    </citation>
    <scope>NUCLEOTIDE SEQUENCE [LARGE SCALE GENOMIC DNA]</scope>
    <source>
        <strain>JEC21 / ATCC MYA-565</strain>
    </source>
</reference>
<feature type="chain" id="PRO_0000361926" description="Kynurenine 3-monooxygenase">
    <location>
        <begin position="1"/>
        <end position="506"/>
    </location>
</feature>
<feature type="region of interest" description="Disordered" evidence="2">
    <location>
        <begin position="153"/>
        <end position="174"/>
    </location>
</feature>
<feature type="compositionally biased region" description="Basic and acidic residues" evidence="2">
    <location>
        <begin position="162"/>
        <end position="171"/>
    </location>
</feature>
<name>KMO_CRYNJ</name>
<protein>
    <recommendedName>
        <fullName evidence="1">Kynurenine 3-monooxygenase</fullName>
        <ecNumber evidence="1">1.14.13.9</ecNumber>
    </recommendedName>
    <alternativeName>
        <fullName evidence="1">Biosynthesis of nicotinic acid protein 4</fullName>
    </alternativeName>
    <alternativeName>
        <fullName evidence="1">Kynurenine 3-hydroxylase</fullName>
    </alternativeName>
</protein>
<evidence type="ECO:0000255" key="1">
    <source>
        <dbReference type="HAMAP-Rule" id="MF_03018"/>
    </source>
</evidence>
<evidence type="ECO:0000256" key="2">
    <source>
        <dbReference type="SAM" id="MobiDB-lite"/>
    </source>
</evidence>
<sequence>MSQSRARKVLIVGAGPVGALTALSLHRRGWEVEVWETRDDPRGQDAAPSNLRSINLAISSRGLEALRSVDPSIAENFLEEAIPMKGRMIHHTDGKQESQLYDPIGGQSINSISRPILNQRLVQSLPEAVKLRFNTKLKHIDFKNRVAYASHKQETSLLPGEESEKDKKQNTEDEDGTAFDLVIGCDGSWSKVRTAMMRAERIDFSQSFIPHAYIELHMPSDPAFPGGYAMDKNHLHIWPRHAFMLIGLPNKDGSFTLTLFIPFSSLELLDTRESAAAFFREHFPSAVDIVGEKVLLDDFEKNPRGNLVTINCTPSAWSSHAILLGDASHSMVPFYGQGLNCGLEDVRVLSSILERHHISPTTTLALGETDPELELALKAYSDERQGDLKAICELALQNYTEMRSHVLSPLHHLRRQVDKVFTTLFRSAPQATLSLMEPFPTKKVRGWTSLYEMVTFRPDVGYSEALRKERWQKDVVGYAGWIGGVVGVGAAGVFAATMAKKWLERR</sequence>
<gene>
    <name evidence="1" type="primary">BNA4</name>
    <name type="ordered locus">CNC04120</name>
</gene>
<comment type="function">
    <text evidence="1">Catalyzes the hydroxylation of L-kynurenine (L-Kyn) to form 3-hydroxy-L-kynurenine (L-3OHKyn). Required for synthesis of quinolinic acid.</text>
</comment>
<comment type="catalytic activity">
    <reaction evidence="1">
        <text>L-kynurenine + NADPH + O2 + H(+) = 3-hydroxy-L-kynurenine + NADP(+) + H2O</text>
        <dbReference type="Rhea" id="RHEA:20545"/>
        <dbReference type="ChEBI" id="CHEBI:15377"/>
        <dbReference type="ChEBI" id="CHEBI:15378"/>
        <dbReference type="ChEBI" id="CHEBI:15379"/>
        <dbReference type="ChEBI" id="CHEBI:57783"/>
        <dbReference type="ChEBI" id="CHEBI:57959"/>
        <dbReference type="ChEBI" id="CHEBI:58125"/>
        <dbReference type="ChEBI" id="CHEBI:58349"/>
        <dbReference type="EC" id="1.14.13.9"/>
    </reaction>
</comment>
<comment type="cofactor">
    <cofactor evidence="1">
        <name>FAD</name>
        <dbReference type="ChEBI" id="CHEBI:57692"/>
    </cofactor>
</comment>
<comment type="pathway">
    <text evidence="1">Cofactor biosynthesis; NAD(+) biosynthesis; quinolinate from L-kynurenine: step 1/3.</text>
</comment>
<comment type="subcellular location">
    <subcellularLocation>
        <location evidence="1">Mitochondrion outer membrane</location>
    </subcellularLocation>
</comment>
<comment type="similarity">
    <text evidence="1">Belongs to the aromatic-ring hydroxylase family. KMO subfamily.</text>
</comment>
<dbReference type="EC" id="1.14.13.9" evidence="1"/>
<dbReference type="EMBL" id="AE017343">
    <property type="protein sequence ID" value="AAW42348.1"/>
    <property type="molecule type" value="Genomic_DNA"/>
</dbReference>
<dbReference type="RefSeq" id="XP_569655.1">
    <property type="nucleotide sequence ID" value="XM_569655.1"/>
</dbReference>
<dbReference type="SMR" id="P0CO48"/>
<dbReference type="STRING" id="214684.P0CO48"/>
<dbReference type="PaxDb" id="214684-P0CO48"/>
<dbReference type="EnsemblFungi" id="AAW42348">
    <property type="protein sequence ID" value="AAW42348"/>
    <property type="gene ID" value="CNC04120"/>
</dbReference>
<dbReference type="GeneID" id="3256682"/>
<dbReference type="KEGG" id="cne:CNC04120"/>
<dbReference type="VEuPathDB" id="FungiDB:CNC04120"/>
<dbReference type="eggNOG" id="KOG2614">
    <property type="taxonomic scope" value="Eukaryota"/>
</dbReference>
<dbReference type="HOGENOM" id="CLU_023210_0_1_1"/>
<dbReference type="InParanoid" id="P0CO48"/>
<dbReference type="OMA" id="REFMFIA"/>
<dbReference type="OrthoDB" id="10053569at2759"/>
<dbReference type="UniPathway" id="UPA00253">
    <property type="reaction ID" value="UER00328"/>
</dbReference>
<dbReference type="Proteomes" id="UP000002149">
    <property type="component" value="Chromosome 3"/>
</dbReference>
<dbReference type="GO" id="GO:0005741">
    <property type="term" value="C:mitochondrial outer membrane"/>
    <property type="evidence" value="ECO:0000318"/>
    <property type="project" value="GO_Central"/>
</dbReference>
<dbReference type="GO" id="GO:0005777">
    <property type="term" value="C:peroxisome"/>
    <property type="evidence" value="ECO:0007669"/>
    <property type="project" value="EnsemblFungi"/>
</dbReference>
<dbReference type="GO" id="GO:0071949">
    <property type="term" value="F:FAD binding"/>
    <property type="evidence" value="ECO:0007669"/>
    <property type="project" value="EnsemblFungi"/>
</dbReference>
<dbReference type="GO" id="GO:0004502">
    <property type="term" value="F:kynurenine 3-monooxygenase activity"/>
    <property type="evidence" value="ECO:0000318"/>
    <property type="project" value="GO_Central"/>
</dbReference>
<dbReference type="GO" id="GO:0016174">
    <property type="term" value="F:NAD(P)H oxidase H2O2-forming activity"/>
    <property type="evidence" value="ECO:0007669"/>
    <property type="project" value="EnsemblFungi"/>
</dbReference>
<dbReference type="GO" id="GO:0034354">
    <property type="term" value="P:'de novo' NAD biosynthetic process from L-tryptophan"/>
    <property type="evidence" value="ECO:0007669"/>
    <property type="project" value="UniProtKB-UniRule"/>
</dbReference>
<dbReference type="GO" id="GO:0043420">
    <property type="term" value="P:anthranilate metabolic process"/>
    <property type="evidence" value="ECO:0007669"/>
    <property type="project" value="UniProtKB-UniRule"/>
</dbReference>
<dbReference type="GO" id="GO:0070189">
    <property type="term" value="P:kynurenine metabolic process"/>
    <property type="evidence" value="ECO:0000318"/>
    <property type="project" value="GO_Central"/>
</dbReference>
<dbReference type="GO" id="GO:0006569">
    <property type="term" value="P:L-tryptophan catabolic process"/>
    <property type="evidence" value="ECO:0007669"/>
    <property type="project" value="UniProtKB-UniRule"/>
</dbReference>
<dbReference type="GO" id="GO:0019805">
    <property type="term" value="P:quinolinate biosynthetic process"/>
    <property type="evidence" value="ECO:0007669"/>
    <property type="project" value="UniProtKB-UniRule"/>
</dbReference>
<dbReference type="FunFam" id="3.50.50.60:FF:000129">
    <property type="entry name" value="Kynurenine 3-monooxygenase"/>
    <property type="match status" value="1"/>
</dbReference>
<dbReference type="Gene3D" id="3.50.50.60">
    <property type="entry name" value="FAD/NAD(P)-binding domain"/>
    <property type="match status" value="1"/>
</dbReference>
<dbReference type="HAMAP" id="MF_01971">
    <property type="entry name" value="Kynurenine_monooxygenase"/>
    <property type="match status" value="1"/>
</dbReference>
<dbReference type="InterPro" id="IPR002938">
    <property type="entry name" value="FAD-bd"/>
</dbReference>
<dbReference type="InterPro" id="IPR036188">
    <property type="entry name" value="FAD/NAD-bd_sf"/>
</dbReference>
<dbReference type="InterPro" id="IPR027545">
    <property type="entry name" value="Kynurenine_monooxygenase"/>
</dbReference>
<dbReference type="PANTHER" id="PTHR46028">
    <property type="entry name" value="KYNURENINE 3-MONOOXYGENASE"/>
    <property type="match status" value="1"/>
</dbReference>
<dbReference type="PANTHER" id="PTHR46028:SF2">
    <property type="entry name" value="KYNURENINE 3-MONOOXYGENASE"/>
    <property type="match status" value="1"/>
</dbReference>
<dbReference type="Pfam" id="PF01494">
    <property type="entry name" value="FAD_binding_3"/>
    <property type="match status" value="1"/>
</dbReference>
<dbReference type="PRINTS" id="PR00420">
    <property type="entry name" value="RNGMNOXGNASE"/>
</dbReference>
<dbReference type="SUPFAM" id="SSF51905">
    <property type="entry name" value="FAD/NAD(P)-binding domain"/>
    <property type="match status" value="1"/>
</dbReference>